<name>CL162_CAEEL</name>
<reference key="1">
    <citation type="journal article" date="1994" name="Nature">
        <title>2.2 Mb of contiguous nucleotide sequence from chromosome III of C. elegans.</title>
        <authorList>
            <person name="Wilson R."/>
            <person name="Ainscough R."/>
            <person name="Anderson K."/>
            <person name="Baynes C."/>
            <person name="Berks M."/>
            <person name="Bonfield J."/>
            <person name="Burton J."/>
            <person name="Connell M."/>
            <person name="Copsey T."/>
            <person name="Cooper J."/>
            <person name="Coulson A."/>
            <person name="Craxton M."/>
            <person name="Dear S."/>
            <person name="Du Z."/>
            <person name="Durbin R."/>
            <person name="Favello A."/>
            <person name="Fraser A."/>
            <person name="Fulton L."/>
            <person name="Gardner A."/>
            <person name="Green P."/>
            <person name="Hawkins T."/>
            <person name="Hillier L."/>
            <person name="Jier M."/>
            <person name="Johnston L."/>
            <person name="Jones M."/>
            <person name="Kershaw J."/>
            <person name="Kirsten J."/>
            <person name="Laisster N."/>
            <person name="Latreille P."/>
            <person name="Lightning J."/>
            <person name="Lloyd C."/>
            <person name="Mortimore B."/>
            <person name="O'Callaghan M."/>
            <person name="Parsons J."/>
            <person name="Percy C."/>
            <person name="Rifken L."/>
            <person name="Roopra A."/>
            <person name="Saunders D."/>
            <person name="Shownkeen R."/>
            <person name="Sims M."/>
            <person name="Smaldon N."/>
            <person name="Smith A."/>
            <person name="Smith M."/>
            <person name="Sonnhammer E."/>
            <person name="Staden R."/>
            <person name="Sulston J."/>
            <person name="Thierry-Mieg J."/>
            <person name="Thomas K."/>
            <person name="Vaudin M."/>
            <person name="Vaughan K."/>
            <person name="Waterston R."/>
            <person name="Watson A."/>
            <person name="Weinstock L."/>
            <person name="Wilkinson-Sproat J."/>
            <person name="Wohldman P."/>
        </authorList>
    </citation>
    <scope>NUCLEOTIDE SEQUENCE [LARGE SCALE GENOMIC DNA]</scope>
    <source>
        <strain>Bristol N2</strain>
    </source>
</reference>
<reference key="2">
    <citation type="journal article" date="1998" name="Science">
        <title>Genome sequence of the nematode C. elegans: a platform for investigating biology.</title>
        <authorList>
            <consortium name="The C. elegans sequencing consortium"/>
        </authorList>
    </citation>
    <scope>NUCLEOTIDE SEQUENCE [LARGE SCALE GENOMIC DNA]</scope>
    <source>
        <strain>Bristol N2</strain>
    </source>
</reference>
<keyword id="KW-1015">Disulfide bond</keyword>
<keyword id="KW-0325">Glycoprotein</keyword>
<keyword id="KW-0430">Lectin</keyword>
<keyword id="KW-1185">Reference proteome</keyword>
<keyword id="KW-0964">Secreted</keyword>
<keyword id="KW-0732">Signal</keyword>
<evidence type="ECO:0000255" key="1"/>
<evidence type="ECO:0000255" key="2">
    <source>
        <dbReference type="PROSITE-ProRule" id="PRU00040"/>
    </source>
</evidence>
<evidence type="ECO:0000256" key="3">
    <source>
        <dbReference type="SAM" id="MobiDB-lite"/>
    </source>
</evidence>
<evidence type="ECO:0000305" key="4"/>
<protein>
    <recommendedName>
        <fullName>C-type lectin domain-containing protein 162</fullName>
    </recommendedName>
</protein>
<organism>
    <name type="scientific">Caenorhabditis elegans</name>
    <dbReference type="NCBI Taxonomy" id="6239"/>
    <lineage>
        <taxon>Eukaryota</taxon>
        <taxon>Metazoa</taxon>
        <taxon>Ecdysozoa</taxon>
        <taxon>Nematoda</taxon>
        <taxon>Chromadorea</taxon>
        <taxon>Rhabditida</taxon>
        <taxon>Rhabditina</taxon>
        <taxon>Rhabditomorpha</taxon>
        <taxon>Rhabditoidea</taxon>
        <taxon>Rhabditidae</taxon>
        <taxon>Peloderinae</taxon>
        <taxon>Caenorhabditis</taxon>
    </lineage>
</organism>
<gene>
    <name type="primary">clec-162</name>
    <name type="ORF">C07A9.1</name>
</gene>
<comment type="subcellular location">
    <subcellularLocation>
        <location evidence="4">Secreted</location>
    </subcellularLocation>
</comment>
<dbReference type="EMBL" id="Z29094">
    <property type="protein sequence ID" value="CAA82340.2"/>
    <property type="molecule type" value="Genomic_DNA"/>
</dbReference>
<dbReference type="PIR" id="S40706">
    <property type="entry name" value="S40706"/>
</dbReference>
<dbReference type="RefSeq" id="NP_499148.2">
    <property type="nucleotide sequence ID" value="NM_066747.5"/>
</dbReference>
<dbReference type="SMR" id="P34312"/>
<dbReference type="FunCoup" id="P34312">
    <property type="interactions" value="268"/>
</dbReference>
<dbReference type="GlyCosmos" id="P34312">
    <property type="glycosylation" value="5 sites, No reported glycans"/>
</dbReference>
<dbReference type="PaxDb" id="6239-C07A9.1"/>
<dbReference type="EnsemblMetazoa" id="C07A9.1.1">
    <property type="protein sequence ID" value="C07A9.1.1"/>
    <property type="gene ID" value="WBGene00007399"/>
</dbReference>
<dbReference type="GeneID" id="182353"/>
<dbReference type="KEGG" id="cel:CELE_C07A9.1"/>
<dbReference type="UCSC" id="C07A9.1">
    <property type="organism name" value="c. elegans"/>
</dbReference>
<dbReference type="AGR" id="WB:WBGene00007399"/>
<dbReference type="CTD" id="182353"/>
<dbReference type="WormBase" id="C07A9.1">
    <property type="protein sequence ID" value="CE37745"/>
    <property type="gene ID" value="WBGene00007399"/>
    <property type="gene designation" value="clec-162"/>
</dbReference>
<dbReference type="eggNOG" id="KOG4297">
    <property type="taxonomic scope" value="Eukaryota"/>
</dbReference>
<dbReference type="HOGENOM" id="CLU_1066470_0_0_1"/>
<dbReference type="InParanoid" id="P34312"/>
<dbReference type="OMA" id="EYWIGAS"/>
<dbReference type="OrthoDB" id="2142683at2759"/>
<dbReference type="PhylomeDB" id="P34312"/>
<dbReference type="PRO" id="PR:P34312"/>
<dbReference type="Proteomes" id="UP000001940">
    <property type="component" value="Chromosome III"/>
</dbReference>
<dbReference type="Bgee" id="WBGene00007399">
    <property type="expression patterns" value="Expressed in adult organism"/>
</dbReference>
<dbReference type="GO" id="GO:0005576">
    <property type="term" value="C:extracellular region"/>
    <property type="evidence" value="ECO:0007669"/>
    <property type="project" value="UniProtKB-SubCell"/>
</dbReference>
<dbReference type="GO" id="GO:0030246">
    <property type="term" value="F:carbohydrate binding"/>
    <property type="evidence" value="ECO:0007669"/>
    <property type="project" value="UniProtKB-KW"/>
</dbReference>
<dbReference type="CDD" id="cd00037">
    <property type="entry name" value="CLECT"/>
    <property type="match status" value="1"/>
</dbReference>
<dbReference type="Gene3D" id="3.10.100.10">
    <property type="entry name" value="Mannose-Binding Protein A, subunit A"/>
    <property type="match status" value="1"/>
</dbReference>
<dbReference type="InterPro" id="IPR001304">
    <property type="entry name" value="C-type_lectin-like"/>
</dbReference>
<dbReference type="InterPro" id="IPR016186">
    <property type="entry name" value="C-type_lectin-like/link_sf"/>
</dbReference>
<dbReference type="InterPro" id="IPR016187">
    <property type="entry name" value="CTDL_fold"/>
</dbReference>
<dbReference type="InterPro" id="IPR050976">
    <property type="entry name" value="Snaclec"/>
</dbReference>
<dbReference type="PANTHER" id="PTHR22991">
    <property type="entry name" value="PROTEIN CBG13490"/>
    <property type="match status" value="1"/>
</dbReference>
<dbReference type="PANTHER" id="PTHR22991:SF40">
    <property type="entry name" value="PROTEIN CBG13490"/>
    <property type="match status" value="1"/>
</dbReference>
<dbReference type="Pfam" id="PF00059">
    <property type="entry name" value="Lectin_C"/>
    <property type="match status" value="1"/>
</dbReference>
<dbReference type="SMART" id="SM00034">
    <property type="entry name" value="CLECT"/>
    <property type="match status" value="1"/>
</dbReference>
<dbReference type="SUPFAM" id="SSF56436">
    <property type="entry name" value="C-type lectin-like"/>
    <property type="match status" value="1"/>
</dbReference>
<dbReference type="PROSITE" id="PS50041">
    <property type="entry name" value="C_TYPE_LECTIN_2"/>
    <property type="match status" value="1"/>
</dbReference>
<sequence>MNIFTLLFIYFLSDTVAAYCYYGTEYKNATGCFQFFRTPLNFTNAVRFCRVNMKSTLVRPTSSIRNQQIRGAALKLGIEEYWIGASNVDNDWEWLDGSMLTYSNFDVGGGYPKKTESQIGAVSMSSLAGLWYTKLDAMFLPFVCEFPPSTVYDNGILYRSPKTQSLIFPSAGTKAALLMVDAVDQSRLYSKNEIGPLKTEAETGEKVYLKPINISTNGFPEFSGPPIVILNPYKRKIKVKPVMVSQTETEMSRSRKEKEETEDSINVKSLKEGGTARGNGSSVAEELNSNSKEKREREENETIRSKTIQISRG</sequence>
<feature type="signal peptide" evidence="1">
    <location>
        <begin position="1"/>
        <end position="17"/>
    </location>
</feature>
<feature type="chain" id="PRO_0000017568" description="C-type lectin domain-containing protein 162">
    <location>
        <begin position="18"/>
        <end position="313"/>
    </location>
</feature>
<feature type="domain" description="C-type lectin" evidence="2">
    <location>
        <begin position="28"/>
        <end position="145"/>
    </location>
</feature>
<feature type="region of interest" description="Disordered" evidence="3">
    <location>
        <begin position="244"/>
        <end position="313"/>
    </location>
</feature>
<feature type="compositionally biased region" description="Basic and acidic residues" evidence="3">
    <location>
        <begin position="250"/>
        <end position="259"/>
    </location>
</feature>
<feature type="compositionally biased region" description="Basic and acidic residues" evidence="3">
    <location>
        <begin position="291"/>
        <end position="304"/>
    </location>
</feature>
<feature type="glycosylation site" description="N-linked (GlcNAc...) asparagine" evidence="1">
    <location>
        <position position="28"/>
    </location>
</feature>
<feature type="glycosylation site" description="N-linked (GlcNAc...) asparagine" evidence="1">
    <location>
        <position position="41"/>
    </location>
</feature>
<feature type="glycosylation site" description="N-linked (GlcNAc...) asparagine" evidence="1">
    <location>
        <position position="213"/>
    </location>
</feature>
<feature type="glycosylation site" description="N-linked (GlcNAc...) asparagine" evidence="1">
    <location>
        <position position="279"/>
    </location>
</feature>
<feature type="glycosylation site" description="N-linked (GlcNAc...) asparagine" evidence="1">
    <location>
        <position position="300"/>
    </location>
</feature>
<feature type="disulfide bond" evidence="2">
    <location>
        <begin position="49"/>
        <end position="144"/>
    </location>
</feature>
<accession>P34312</accession>
<proteinExistence type="inferred from homology"/>